<reference key="1">
    <citation type="journal article" date="2008" name="J. Bacteriol.">
        <title>Complete genome sequence of Neisseria gonorrhoeae NCCP11945.</title>
        <authorList>
            <person name="Chung G.T."/>
            <person name="Yoo J.S."/>
            <person name="Oh H.B."/>
            <person name="Lee Y.S."/>
            <person name="Cha S.H."/>
            <person name="Kim S.J."/>
            <person name="Yoo C.K."/>
        </authorList>
    </citation>
    <scope>NUCLEOTIDE SEQUENCE [LARGE SCALE GENOMIC DNA]</scope>
    <source>
        <strain>NCCP11945</strain>
    </source>
</reference>
<feature type="chain" id="PRO_1000098958" description="4-hydroxy-3-methylbut-2-enyl diphosphate reductase">
    <location>
        <begin position="1"/>
        <end position="322"/>
    </location>
</feature>
<feature type="active site" description="Proton donor" evidence="1">
    <location>
        <position position="129"/>
    </location>
</feature>
<feature type="binding site" evidence="1">
    <location>
        <position position="15"/>
    </location>
    <ligand>
        <name>[4Fe-4S] cluster</name>
        <dbReference type="ChEBI" id="CHEBI:49883"/>
    </ligand>
</feature>
<feature type="binding site" evidence="1">
    <location>
        <position position="44"/>
    </location>
    <ligand>
        <name>(2E)-4-hydroxy-3-methylbut-2-enyl diphosphate</name>
        <dbReference type="ChEBI" id="CHEBI:128753"/>
    </ligand>
</feature>
<feature type="binding site" evidence="1">
    <location>
        <position position="44"/>
    </location>
    <ligand>
        <name>dimethylallyl diphosphate</name>
        <dbReference type="ChEBI" id="CHEBI:57623"/>
    </ligand>
</feature>
<feature type="binding site" evidence="1">
    <location>
        <position position="44"/>
    </location>
    <ligand>
        <name>isopentenyl diphosphate</name>
        <dbReference type="ChEBI" id="CHEBI:128769"/>
    </ligand>
</feature>
<feature type="binding site" evidence="1">
    <location>
        <position position="77"/>
    </location>
    <ligand>
        <name>(2E)-4-hydroxy-3-methylbut-2-enyl diphosphate</name>
        <dbReference type="ChEBI" id="CHEBI:128753"/>
    </ligand>
</feature>
<feature type="binding site" evidence="1">
    <location>
        <position position="77"/>
    </location>
    <ligand>
        <name>dimethylallyl diphosphate</name>
        <dbReference type="ChEBI" id="CHEBI:57623"/>
    </ligand>
</feature>
<feature type="binding site" evidence="1">
    <location>
        <position position="77"/>
    </location>
    <ligand>
        <name>isopentenyl diphosphate</name>
        <dbReference type="ChEBI" id="CHEBI:128769"/>
    </ligand>
</feature>
<feature type="binding site" evidence="1">
    <location>
        <position position="99"/>
    </location>
    <ligand>
        <name>[4Fe-4S] cluster</name>
        <dbReference type="ChEBI" id="CHEBI:49883"/>
    </ligand>
</feature>
<feature type="binding site" evidence="1">
    <location>
        <position position="127"/>
    </location>
    <ligand>
        <name>(2E)-4-hydroxy-3-methylbut-2-enyl diphosphate</name>
        <dbReference type="ChEBI" id="CHEBI:128753"/>
    </ligand>
</feature>
<feature type="binding site" evidence="1">
    <location>
        <position position="127"/>
    </location>
    <ligand>
        <name>dimethylallyl diphosphate</name>
        <dbReference type="ChEBI" id="CHEBI:57623"/>
    </ligand>
</feature>
<feature type="binding site" evidence="1">
    <location>
        <position position="127"/>
    </location>
    <ligand>
        <name>isopentenyl diphosphate</name>
        <dbReference type="ChEBI" id="CHEBI:128769"/>
    </ligand>
</feature>
<feature type="binding site" evidence="1">
    <location>
        <position position="168"/>
    </location>
    <ligand>
        <name>(2E)-4-hydroxy-3-methylbut-2-enyl diphosphate</name>
        <dbReference type="ChEBI" id="CHEBI:128753"/>
    </ligand>
</feature>
<feature type="binding site" evidence="1">
    <location>
        <position position="198"/>
    </location>
    <ligand>
        <name>[4Fe-4S] cluster</name>
        <dbReference type="ChEBI" id="CHEBI:49883"/>
    </ligand>
</feature>
<feature type="binding site" evidence="1">
    <location>
        <position position="226"/>
    </location>
    <ligand>
        <name>(2E)-4-hydroxy-3-methylbut-2-enyl diphosphate</name>
        <dbReference type="ChEBI" id="CHEBI:128753"/>
    </ligand>
</feature>
<feature type="binding site" evidence="1">
    <location>
        <position position="226"/>
    </location>
    <ligand>
        <name>dimethylallyl diphosphate</name>
        <dbReference type="ChEBI" id="CHEBI:57623"/>
    </ligand>
</feature>
<feature type="binding site" evidence="1">
    <location>
        <position position="226"/>
    </location>
    <ligand>
        <name>isopentenyl diphosphate</name>
        <dbReference type="ChEBI" id="CHEBI:128769"/>
    </ligand>
</feature>
<feature type="binding site" evidence="1">
    <location>
        <position position="227"/>
    </location>
    <ligand>
        <name>(2E)-4-hydroxy-3-methylbut-2-enyl diphosphate</name>
        <dbReference type="ChEBI" id="CHEBI:128753"/>
    </ligand>
</feature>
<feature type="binding site" evidence="1">
    <location>
        <position position="227"/>
    </location>
    <ligand>
        <name>dimethylallyl diphosphate</name>
        <dbReference type="ChEBI" id="CHEBI:57623"/>
    </ligand>
</feature>
<feature type="binding site" evidence="1">
    <location>
        <position position="227"/>
    </location>
    <ligand>
        <name>isopentenyl diphosphate</name>
        <dbReference type="ChEBI" id="CHEBI:128769"/>
    </ligand>
</feature>
<feature type="binding site" evidence="1">
    <location>
        <position position="228"/>
    </location>
    <ligand>
        <name>(2E)-4-hydroxy-3-methylbut-2-enyl diphosphate</name>
        <dbReference type="ChEBI" id="CHEBI:128753"/>
    </ligand>
</feature>
<feature type="binding site" evidence="1">
    <location>
        <position position="228"/>
    </location>
    <ligand>
        <name>dimethylallyl diphosphate</name>
        <dbReference type="ChEBI" id="CHEBI:57623"/>
    </ligand>
</feature>
<feature type="binding site" evidence="1">
    <location>
        <position position="228"/>
    </location>
    <ligand>
        <name>isopentenyl diphosphate</name>
        <dbReference type="ChEBI" id="CHEBI:128769"/>
    </ligand>
</feature>
<feature type="binding site" evidence="1">
    <location>
        <position position="270"/>
    </location>
    <ligand>
        <name>(2E)-4-hydroxy-3-methylbut-2-enyl diphosphate</name>
        <dbReference type="ChEBI" id="CHEBI:128753"/>
    </ligand>
</feature>
<feature type="binding site" evidence="1">
    <location>
        <position position="270"/>
    </location>
    <ligand>
        <name>dimethylallyl diphosphate</name>
        <dbReference type="ChEBI" id="CHEBI:57623"/>
    </ligand>
</feature>
<feature type="binding site" evidence="1">
    <location>
        <position position="270"/>
    </location>
    <ligand>
        <name>isopentenyl diphosphate</name>
        <dbReference type="ChEBI" id="CHEBI:128769"/>
    </ligand>
</feature>
<gene>
    <name evidence="1" type="primary">ispH</name>
    <name type="ordered locus">NGK_0106</name>
</gene>
<organism>
    <name type="scientific">Neisseria gonorrhoeae (strain NCCP11945)</name>
    <dbReference type="NCBI Taxonomy" id="521006"/>
    <lineage>
        <taxon>Bacteria</taxon>
        <taxon>Pseudomonadati</taxon>
        <taxon>Pseudomonadota</taxon>
        <taxon>Betaproteobacteria</taxon>
        <taxon>Neisseriales</taxon>
        <taxon>Neisseriaceae</taxon>
        <taxon>Neisseria</taxon>
    </lineage>
</organism>
<proteinExistence type="inferred from homology"/>
<name>ISPH_NEIG2</name>
<protein>
    <recommendedName>
        <fullName evidence="1">4-hydroxy-3-methylbut-2-enyl diphosphate reductase</fullName>
        <shortName evidence="1">HMBPP reductase</shortName>
        <ecNumber evidence="1">1.17.7.4</ecNumber>
    </recommendedName>
</protein>
<evidence type="ECO:0000255" key="1">
    <source>
        <dbReference type="HAMAP-Rule" id="MF_00191"/>
    </source>
</evidence>
<sequence>MNGKTIILANPRGFCAGVDRAISIVERALEEFGAPVYVRHEVVHNKFVVDNLREKGAVFIEDLAEVPPGATLVYSAHGVSKAVQQEAAERGFRVFDATCPLVTKVHKEVARLDAQDCEIIMIGHKGHAEVEGTMGQLAPGKMLLVETVGDVAKLEVRNPDKLAYVSQTTLSVDETKDIIAALNARFPNIRNPHKEDICYATTNRQTAVKELAEQCDIVIVVGSPNSSNSNRLREVAASRGIDAYMVDNASYLQRTWFEGKSKVGVTAGASAPEVLVREVLATIRGWGHETVREGGGAEESIVFVLPKELRREGETKPDLCKR</sequence>
<dbReference type="EC" id="1.17.7.4" evidence="1"/>
<dbReference type="EMBL" id="CP001050">
    <property type="protein sequence ID" value="ACF28804.1"/>
    <property type="molecule type" value="Genomic_DNA"/>
</dbReference>
<dbReference type="RefSeq" id="WP_010356621.1">
    <property type="nucleotide sequence ID" value="NC_011035.1"/>
</dbReference>
<dbReference type="SMR" id="B4RPZ2"/>
<dbReference type="KEGG" id="ngk:NGK_0106"/>
<dbReference type="HOGENOM" id="CLU_027486_1_0_4"/>
<dbReference type="UniPathway" id="UPA00056">
    <property type="reaction ID" value="UER00097"/>
</dbReference>
<dbReference type="UniPathway" id="UPA00059">
    <property type="reaction ID" value="UER00105"/>
</dbReference>
<dbReference type="Proteomes" id="UP000002564">
    <property type="component" value="Chromosome"/>
</dbReference>
<dbReference type="GO" id="GO:0051539">
    <property type="term" value="F:4 iron, 4 sulfur cluster binding"/>
    <property type="evidence" value="ECO:0007669"/>
    <property type="project" value="UniProtKB-UniRule"/>
</dbReference>
<dbReference type="GO" id="GO:0051745">
    <property type="term" value="F:4-hydroxy-3-methylbut-2-enyl diphosphate reductase activity"/>
    <property type="evidence" value="ECO:0007669"/>
    <property type="project" value="UniProtKB-UniRule"/>
</dbReference>
<dbReference type="GO" id="GO:0046872">
    <property type="term" value="F:metal ion binding"/>
    <property type="evidence" value="ECO:0007669"/>
    <property type="project" value="UniProtKB-KW"/>
</dbReference>
<dbReference type="GO" id="GO:0050992">
    <property type="term" value="P:dimethylallyl diphosphate biosynthetic process"/>
    <property type="evidence" value="ECO:0007669"/>
    <property type="project" value="UniProtKB-UniRule"/>
</dbReference>
<dbReference type="GO" id="GO:0019288">
    <property type="term" value="P:isopentenyl diphosphate biosynthetic process, methylerythritol 4-phosphate pathway"/>
    <property type="evidence" value="ECO:0007669"/>
    <property type="project" value="UniProtKB-UniRule"/>
</dbReference>
<dbReference type="GO" id="GO:0016114">
    <property type="term" value="P:terpenoid biosynthetic process"/>
    <property type="evidence" value="ECO:0007669"/>
    <property type="project" value="UniProtKB-UniRule"/>
</dbReference>
<dbReference type="CDD" id="cd13944">
    <property type="entry name" value="lytB_ispH"/>
    <property type="match status" value="1"/>
</dbReference>
<dbReference type="Gene3D" id="3.40.50.11270">
    <property type="match status" value="1"/>
</dbReference>
<dbReference type="Gene3D" id="3.40.1010.20">
    <property type="entry name" value="4-hydroxy-3-methylbut-2-enyl diphosphate reductase, catalytic domain"/>
    <property type="match status" value="2"/>
</dbReference>
<dbReference type="HAMAP" id="MF_00191">
    <property type="entry name" value="IspH"/>
    <property type="match status" value="1"/>
</dbReference>
<dbReference type="InterPro" id="IPR003451">
    <property type="entry name" value="LytB/IspH"/>
</dbReference>
<dbReference type="NCBIfam" id="TIGR00216">
    <property type="entry name" value="ispH_lytB"/>
    <property type="match status" value="1"/>
</dbReference>
<dbReference type="NCBIfam" id="NF002188">
    <property type="entry name" value="PRK01045.1-2"/>
    <property type="match status" value="1"/>
</dbReference>
<dbReference type="NCBIfam" id="NF002189">
    <property type="entry name" value="PRK01045.1-3"/>
    <property type="match status" value="1"/>
</dbReference>
<dbReference type="NCBIfam" id="NF002190">
    <property type="entry name" value="PRK01045.1-4"/>
    <property type="match status" value="1"/>
</dbReference>
<dbReference type="PANTHER" id="PTHR30426">
    <property type="entry name" value="4-HYDROXY-3-METHYLBUT-2-ENYL DIPHOSPHATE REDUCTASE"/>
    <property type="match status" value="1"/>
</dbReference>
<dbReference type="PANTHER" id="PTHR30426:SF0">
    <property type="entry name" value="4-HYDROXY-3-METHYLBUT-2-ENYL DIPHOSPHATE REDUCTASE"/>
    <property type="match status" value="1"/>
</dbReference>
<dbReference type="Pfam" id="PF02401">
    <property type="entry name" value="LYTB"/>
    <property type="match status" value="1"/>
</dbReference>
<comment type="function">
    <text evidence="1">Catalyzes the conversion of 1-hydroxy-2-methyl-2-(E)-butenyl 4-diphosphate (HMBPP) into a mixture of isopentenyl diphosphate (IPP) and dimethylallyl diphosphate (DMAPP). Acts in the terminal step of the DOXP/MEP pathway for isoprenoid precursor biosynthesis.</text>
</comment>
<comment type="catalytic activity">
    <reaction evidence="1">
        <text>isopentenyl diphosphate + 2 oxidized [2Fe-2S]-[ferredoxin] + H2O = (2E)-4-hydroxy-3-methylbut-2-enyl diphosphate + 2 reduced [2Fe-2S]-[ferredoxin] + 2 H(+)</text>
        <dbReference type="Rhea" id="RHEA:24488"/>
        <dbReference type="Rhea" id="RHEA-COMP:10000"/>
        <dbReference type="Rhea" id="RHEA-COMP:10001"/>
        <dbReference type="ChEBI" id="CHEBI:15377"/>
        <dbReference type="ChEBI" id="CHEBI:15378"/>
        <dbReference type="ChEBI" id="CHEBI:33737"/>
        <dbReference type="ChEBI" id="CHEBI:33738"/>
        <dbReference type="ChEBI" id="CHEBI:128753"/>
        <dbReference type="ChEBI" id="CHEBI:128769"/>
        <dbReference type="EC" id="1.17.7.4"/>
    </reaction>
</comment>
<comment type="catalytic activity">
    <reaction evidence="1">
        <text>dimethylallyl diphosphate + 2 oxidized [2Fe-2S]-[ferredoxin] + H2O = (2E)-4-hydroxy-3-methylbut-2-enyl diphosphate + 2 reduced [2Fe-2S]-[ferredoxin] + 2 H(+)</text>
        <dbReference type="Rhea" id="RHEA:24825"/>
        <dbReference type="Rhea" id="RHEA-COMP:10000"/>
        <dbReference type="Rhea" id="RHEA-COMP:10001"/>
        <dbReference type="ChEBI" id="CHEBI:15377"/>
        <dbReference type="ChEBI" id="CHEBI:15378"/>
        <dbReference type="ChEBI" id="CHEBI:33737"/>
        <dbReference type="ChEBI" id="CHEBI:33738"/>
        <dbReference type="ChEBI" id="CHEBI:57623"/>
        <dbReference type="ChEBI" id="CHEBI:128753"/>
        <dbReference type="EC" id="1.17.7.4"/>
    </reaction>
</comment>
<comment type="cofactor">
    <cofactor evidence="1">
        <name>[4Fe-4S] cluster</name>
        <dbReference type="ChEBI" id="CHEBI:49883"/>
    </cofactor>
    <text evidence="1">Binds 1 [4Fe-4S] cluster per subunit.</text>
</comment>
<comment type="pathway">
    <text evidence="1">Isoprenoid biosynthesis; dimethylallyl diphosphate biosynthesis; dimethylallyl diphosphate from (2E)-4-hydroxy-3-methylbutenyl diphosphate: step 1/1.</text>
</comment>
<comment type="pathway">
    <text evidence="1">Isoprenoid biosynthesis; isopentenyl diphosphate biosynthesis via DXP pathway; isopentenyl diphosphate from 1-deoxy-D-xylulose 5-phosphate: step 6/6.</text>
</comment>
<comment type="similarity">
    <text evidence="1">Belongs to the IspH family.</text>
</comment>
<keyword id="KW-0004">4Fe-4S</keyword>
<keyword id="KW-0408">Iron</keyword>
<keyword id="KW-0411">Iron-sulfur</keyword>
<keyword id="KW-0414">Isoprene biosynthesis</keyword>
<keyword id="KW-0479">Metal-binding</keyword>
<keyword id="KW-0560">Oxidoreductase</keyword>
<accession>B4RPZ2</accession>